<name>ZN148_PONAB</name>
<protein>
    <recommendedName>
        <fullName>Zinc finger protein 148</fullName>
    </recommendedName>
</protein>
<sequence>MNIDDKLEGLFLKCGGIDEMQSSRTMVVMGGVSGQSTVSGELQDSVLQDRSMPHQEILAADEVLQESEMRQQDMISHDELMVHEETVKNDEEQMETHERLPQGLQYALNVPISVKQEITFTDVSEQLMRDKKQIREPVDLQKKKKRKQRSPAKILTINEDGSLGLKTPKSHVCEHCNAAFRTNYHLQRHVFIHTGEKPFQCSQCDMRFIQKYLLQRHEKIHTGEKPFRCDECGMRFIQKYHMERHKRTHSGEKPYQCEYCLQYFSRTDRVLKHKRMCHENHDKKLNRCAIKGGLLTSEEDSGFSTSPKDNSLPKKKRQKTEKKSSGMDKESALDKSDLKKDKNDYLPLYSSSTKVKDGYMVAEYAVEMPHSSVGGSHLEDASGEIHPPKLVLKKINSKRSLKQPLEQNQTISPLTTYEESKVSKYAFELVDKQALLDSEGNADIDQVDNLQEGPSKPVHSSTNYDDAMQFLKKKRYLQAASNNSREYALNVGTIASQPSVTQAAVASVIDESTTASILESQALNVEIKSNHDKNVIPDEVLQTLLDHYSHKANGQHEISFSVADTEVTSSISINSSEVPEVTPSENVGSSSQASSSDKANMLQEYSKFLQQALDRTSQNDAYLNSPSLNFVTDNQTLPNQPAFSSTDKQVYATMPINSFRSGMNSPLRTTPDKSHFGLIVGDSQHSFPFSGDETNHASATSTQDFLDQVTSQKKAEAQPVHQAYQMSSFEQPFRAPYHGSRAGIATQFSTANGQVNLRGPGTSAEFSEFPLVNVNDSRAGMTSSPDATTGQTFG</sequence>
<accession>Q5R782</accession>
<evidence type="ECO:0000250" key="1"/>
<evidence type="ECO:0000250" key="2">
    <source>
        <dbReference type="UniProtKB" id="Q61624"/>
    </source>
</evidence>
<evidence type="ECO:0000250" key="3">
    <source>
        <dbReference type="UniProtKB" id="Q9UQR1"/>
    </source>
</evidence>
<evidence type="ECO:0000255" key="4">
    <source>
        <dbReference type="PROSITE-ProRule" id="PRU00042"/>
    </source>
</evidence>
<evidence type="ECO:0000256" key="5">
    <source>
        <dbReference type="SAM" id="MobiDB-lite"/>
    </source>
</evidence>
<evidence type="ECO:0000305" key="6"/>
<proteinExistence type="evidence at transcript level"/>
<comment type="function">
    <text evidence="1">Involved in transcriptional regulation. Represses the transcription of a number of genes including gastrin, stromelysin and enolase. Binds to the G-rich box in the enhancer region of these genes (By similarity).</text>
</comment>
<comment type="subunit">
    <text evidence="2 3">Interacts with HNRNPDL. Interacts with the 5FMC complex; the interaction requires association with CHTOP. Interacts with CAVIN1.</text>
</comment>
<comment type="subcellular location">
    <subcellularLocation>
        <location evidence="1">Nucleus</location>
    </subcellularLocation>
</comment>
<comment type="PTM">
    <text evidence="1">Sumoylated with SUMO2. Desumoylated by SENP3, resulting in the stimulation of transcription of its target genes (By similarity).</text>
</comment>
<comment type="similarity">
    <text evidence="6">Belongs to the krueppel C2H2-type zinc-finger protein family.</text>
</comment>
<keyword id="KW-0007">Acetylation</keyword>
<keyword id="KW-0238">DNA-binding</keyword>
<keyword id="KW-1017">Isopeptide bond</keyword>
<keyword id="KW-0479">Metal-binding</keyword>
<keyword id="KW-0539">Nucleus</keyword>
<keyword id="KW-0597">Phosphoprotein</keyword>
<keyword id="KW-1185">Reference proteome</keyword>
<keyword id="KW-0677">Repeat</keyword>
<keyword id="KW-0678">Repressor</keyword>
<keyword id="KW-0804">Transcription</keyword>
<keyword id="KW-0805">Transcription regulation</keyword>
<keyword id="KW-0832">Ubl conjugation</keyword>
<keyword id="KW-0862">Zinc</keyword>
<keyword id="KW-0863">Zinc-finger</keyword>
<dbReference type="EMBL" id="CR860236">
    <property type="protein sequence ID" value="CAH92378.1"/>
    <property type="molecule type" value="mRNA"/>
</dbReference>
<dbReference type="RefSeq" id="NP_001126401.1">
    <property type="nucleotide sequence ID" value="NM_001132929.1"/>
</dbReference>
<dbReference type="SMR" id="Q5R782"/>
<dbReference type="STRING" id="9601.ENSPPYP00000015057"/>
<dbReference type="GeneID" id="100447276"/>
<dbReference type="KEGG" id="pon:100447276"/>
<dbReference type="CTD" id="7707"/>
<dbReference type="eggNOG" id="KOG1721">
    <property type="taxonomic scope" value="Eukaryota"/>
</dbReference>
<dbReference type="InParanoid" id="Q5R782"/>
<dbReference type="OrthoDB" id="8117402at2759"/>
<dbReference type="Proteomes" id="UP000001595">
    <property type="component" value="Unplaced"/>
</dbReference>
<dbReference type="GO" id="GO:0005634">
    <property type="term" value="C:nucleus"/>
    <property type="evidence" value="ECO:0007669"/>
    <property type="project" value="UniProtKB-SubCell"/>
</dbReference>
<dbReference type="GO" id="GO:0000981">
    <property type="term" value="F:DNA-binding transcription factor activity, RNA polymerase II-specific"/>
    <property type="evidence" value="ECO:0007669"/>
    <property type="project" value="TreeGrafter"/>
</dbReference>
<dbReference type="GO" id="GO:0000978">
    <property type="term" value="F:RNA polymerase II cis-regulatory region sequence-specific DNA binding"/>
    <property type="evidence" value="ECO:0007669"/>
    <property type="project" value="TreeGrafter"/>
</dbReference>
<dbReference type="GO" id="GO:0008270">
    <property type="term" value="F:zinc ion binding"/>
    <property type="evidence" value="ECO:0007669"/>
    <property type="project" value="UniProtKB-KW"/>
</dbReference>
<dbReference type="FunFam" id="3.30.160.60:FF:004830">
    <property type="match status" value="1"/>
</dbReference>
<dbReference type="FunFam" id="3.30.160.60:FF:000067">
    <property type="entry name" value="Vascular endothelial zinc finger 1"/>
    <property type="match status" value="1"/>
</dbReference>
<dbReference type="FunFam" id="3.30.160.60:FF:000042">
    <property type="entry name" value="Zinc finger protein 148"/>
    <property type="match status" value="2"/>
</dbReference>
<dbReference type="Gene3D" id="3.30.160.60">
    <property type="entry name" value="Classic Zinc Finger"/>
    <property type="match status" value="4"/>
</dbReference>
<dbReference type="InterPro" id="IPR036236">
    <property type="entry name" value="Znf_C2H2_sf"/>
</dbReference>
<dbReference type="InterPro" id="IPR013087">
    <property type="entry name" value="Znf_C2H2_type"/>
</dbReference>
<dbReference type="PANTHER" id="PTHR23235:SF155">
    <property type="entry name" value="EARLY GROWTH RESPONSE 4-RELATED"/>
    <property type="match status" value="1"/>
</dbReference>
<dbReference type="PANTHER" id="PTHR23235">
    <property type="entry name" value="KRUEPPEL-LIKE TRANSCRIPTION FACTOR"/>
    <property type="match status" value="1"/>
</dbReference>
<dbReference type="Pfam" id="PF00096">
    <property type="entry name" value="zf-C2H2"/>
    <property type="match status" value="3"/>
</dbReference>
<dbReference type="SMART" id="SM00355">
    <property type="entry name" value="ZnF_C2H2"/>
    <property type="match status" value="4"/>
</dbReference>
<dbReference type="SUPFAM" id="SSF57667">
    <property type="entry name" value="beta-beta-alpha zinc fingers"/>
    <property type="match status" value="2"/>
</dbReference>
<dbReference type="PROSITE" id="PS00028">
    <property type="entry name" value="ZINC_FINGER_C2H2_1"/>
    <property type="match status" value="4"/>
</dbReference>
<dbReference type="PROSITE" id="PS50157">
    <property type="entry name" value="ZINC_FINGER_C2H2_2"/>
    <property type="match status" value="4"/>
</dbReference>
<gene>
    <name type="primary">ZNF148</name>
</gene>
<organism>
    <name type="scientific">Pongo abelii</name>
    <name type="common">Sumatran orangutan</name>
    <name type="synonym">Pongo pygmaeus abelii</name>
    <dbReference type="NCBI Taxonomy" id="9601"/>
    <lineage>
        <taxon>Eukaryota</taxon>
        <taxon>Metazoa</taxon>
        <taxon>Chordata</taxon>
        <taxon>Craniata</taxon>
        <taxon>Vertebrata</taxon>
        <taxon>Euteleostomi</taxon>
        <taxon>Mammalia</taxon>
        <taxon>Eutheria</taxon>
        <taxon>Euarchontoglires</taxon>
        <taxon>Primates</taxon>
        <taxon>Haplorrhini</taxon>
        <taxon>Catarrhini</taxon>
        <taxon>Hominidae</taxon>
        <taxon>Pongo</taxon>
    </lineage>
</organism>
<feature type="chain" id="PRO_0000354689" description="Zinc finger protein 148">
    <location>
        <begin position="1"/>
        <end position="794"/>
    </location>
</feature>
<feature type="zinc finger region" description="C2H2-type 1" evidence="4">
    <location>
        <begin position="171"/>
        <end position="193"/>
    </location>
</feature>
<feature type="zinc finger region" description="C2H2-type 2" evidence="4">
    <location>
        <begin position="199"/>
        <end position="221"/>
    </location>
</feature>
<feature type="zinc finger region" description="C2H2-type 3" evidence="4">
    <location>
        <begin position="227"/>
        <end position="249"/>
    </location>
</feature>
<feature type="zinc finger region" description="C2H2-type 4" evidence="4">
    <location>
        <begin position="255"/>
        <end position="278"/>
    </location>
</feature>
<feature type="region of interest" description="Disordered" evidence="5">
    <location>
        <begin position="298"/>
        <end position="336"/>
    </location>
</feature>
<feature type="region of interest" description="Disordered" evidence="5">
    <location>
        <begin position="574"/>
        <end position="599"/>
    </location>
</feature>
<feature type="compositionally biased region" description="Basic and acidic residues" evidence="5">
    <location>
        <begin position="321"/>
        <end position="336"/>
    </location>
</feature>
<feature type="compositionally biased region" description="Polar residues" evidence="5">
    <location>
        <begin position="574"/>
        <end position="588"/>
    </location>
</feature>
<feature type="modified residue" description="Phosphoserine" evidence="2">
    <location>
        <position position="51"/>
    </location>
</feature>
<feature type="modified residue" description="Phosphothreonine" evidence="3">
    <location>
        <position position="194"/>
    </location>
</feature>
<feature type="modified residue" description="Phosphoserine" evidence="3">
    <location>
        <position position="250"/>
    </location>
</feature>
<feature type="modified residue" description="Phosphoserine" evidence="2">
    <location>
        <position position="301"/>
    </location>
</feature>
<feature type="modified residue" description="Phosphoserine" evidence="3">
    <location>
        <position position="306"/>
    </location>
</feature>
<feature type="modified residue" description="Phosphoserine" evidence="3">
    <location>
        <position position="412"/>
    </location>
</feature>
<feature type="modified residue" description="N6-acetyllysine" evidence="3">
    <location>
        <position position="607"/>
    </location>
</feature>
<feature type="modified residue" description="Phosphoserine" evidence="3">
    <location>
        <position position="665"/>
    </location>
</feature>
<feature type="modified residue" description="Phosphoserine" evidence="3">
    <location>
        <position position="784"/>
    </location>
</feature>
<feature type="cross-link" description="Glycyl lysine isopeptide (Lys-Gly) (interchain with G-Cter in SUMO2)" evidence="3">
    <location>
        <position position="6"/>
    </location>
</feature>
<feature type="cross-link" description="Glycyl lysine isopeptide (Lys-Gly) (interchain with G-Cter in SUMO2)" evidence="3">
    <location>
        <position position="88"/>
    </location>
</feature>
<feature type="cross-link" description="Glycyl lysine isopeptide (Lys-Gly) (interchain with G-Cter in SUMO2)" evidence="3">
    <location>
        <position position="115"/>
    </location>
</feature>
<feature type="cross-link" description="Glycyl lysine isopeptide (Lys-Gly) (interchain with G-Cter in SUMO2)" evidence="3">
    <location>
        <position position="132"/>
    </location>
</feature>
<feature type="cross-link" description="Glycyl lysine isopeptide (Lys-Gly) (interchain with G-Cter in SUMO2)" evidence="3">
    <location>
        <position position="291"/>
    </location>
</feature>
<feature type="cross-link" description="Glycyl lysine isopeptide (Lys-Gly) (interchain with G-Cter in SUMO2)" evidence="3">
    <location>
        <position position="308"/>
    </location>
</feature>
<feature type="cross-link" description="Glycyl lysine isopeptide (Lys-Gly) (interchain with G-Cter in SUMO1); alternate" evidence="3">
    <location>
        <position position="356"/>
    </location>
</feature>
<feature type="cross-link" description="Glycyl lysine isopeptide (Lys-Gly) (interchain with G-Cter in SUMO2); alternate" evidence="3">
    <location>
        <position position="356"/>
    </location>
</feature>
<feature type="cross-link" description="Glycyl lysine isopeptide (Lys-Gly) (interchain with G-Cter in SUMO2)" evidence="3">
    <location>
        <position position="402"/>
    </location>
</feature>
<feature type="cross-link" description="Glycyl lysine isopeptide (Lys-Gly) (interchain with G-Cter in SUMO2)" evidence="3">
    <location>
        <position position="421"/>
    </location>
</feature>
<feature type="cross-link" description="Glycyl lysine isopeptide (Lys-Gly) (interchain with G-Cter in SUMO2)" evidence="3">
    <location>
        <position position="424"/>
    </location>
</feature>
<reference key="1">
    <citation type="submission" date="2004-11" db="EMBL/GenBank/DDBJ databases">
        <authorList>
            <consortium name="The German cDNA consortium"/>
        </authorList>
    </citation>
    <scope>NUCLEOTIDE SEQUENCE [LARGE SCALE MRNA]</scope>
    <source>
        <tissue>Kidney</tissue>
    </source>
</reference>